<reference key="1">
    <citation type="journal article" date="2006" name="Dev. Biol.">
        <title>FNDC3A is required for adhesion between spermatids and Sertoli cells.</title>
        <authorList>
            <person name="Obholz K.L."/>
            <person name="Akopyan A."/>
            <person name="Waymire K.G."/>
            <person name="MacGregor G.R."/>
        </authorList>
    </citation>
    <scope>NUCLEOTIDE SEQUENCE [MRNA]</scope>
    <scope>FUNCTION</scope>
    <scope>TISSUE SPECIFICITY</scope>
    <source>
        <strain>C57BL/6J</strain>
    </source>
</reference>
<reference key="2">
    <citation type="journal article" date="2005" name="Science">
        <title>The transcriptional landscape of the mammalian genome.</title>
        <authorList>
            <person name="Carninci P."/>
            <person name="Kasukawa T."/>
            <person name="Katayama S."/>
            <person name="Gough J."/>
            <person name="Frith M.C."/>
            <person name="Maeda N."/>
            <person name="Oyama R."/>
            <person name="Ravasi T."/>
            <person name="Lenhard B."/>
            <person name="Wells C."/>
            <person name="Kodzius R."/>
            <person name="Shimokawa K."/>
            <person name="Bajic V.B."/>
            <person name="Brenner S.E."/>
            <person name="Batalov S."/>
            <person name="Forrest A.R."/>
            <person name="Zavolan M."/>
            <person name="Davis M.J."/>
            <person name="Wilming L.G."/>
            <person name="Aidinis V."/>
            <person name="Allen J.E."/>
            <person name="Ambesi-Impiombato A."/>
            <person name="Apweiler R."/>
            <person name="Aturaliya R.N."/>
            <person name="Bailey T.L."/>
            <person name="Bansal M."/>
            <person name="Baxter L."/>
            <person name="Beisel K.W."/>
            <person name="Bersano T."/>
            <person name="Bono H."/>
            <person name="Chalk A.M."/>
            <person name="Chiu K.P."/>
            <person name="Choudhary V."/>
            <person name="Christoffels A."/>
            <person name="Clutterbuck D.R."/>
            <person name="Crowe M.L."/>
            <person name="Dalla E."/>
            <person name="Dalrymple B.P."/>
            <person name="de Bono B."/>
            <person name="Della Gatta G."/>
            <person name="di Bernardo D."/>
            <person name="Down T."/>
            <person name="Engstrom P."/>
            <person name="Fagiolini M."/>
            <person name="Faulkner G."/>
            <person name="Fletcher C.F."/>
            <person name="Fukushima T."/>
            <person name="Furuno M."/>
            <person name="Futaki S."/>
            <person name="Gariboldi M."/>
            <person name="Georgii-Hemming P."/>
            <person name="Gingeras T.R."/>
            <person name="Gojobori T."/>
            <person name="Green R.E."/>
            <person name="Gustincich S."/>
            <person name="Harbers M."/>
            <person name="Hayashi Y."/>
            <person name="Hensch T.K."/>
            <person name="Hirokawa N."/>
            <person name="Hill D."/>
            <person name="Huminiecki L."/>
            <person name="Iacono M."/>
            <person name="Ikeo K."/>
            <person name="Iwama A."/>
            <person name="Ishikawa T."/>
            <person name="Jakt M."/>
            <person name="Kanapin A."/>
            <person name="Katoh M."/>
            <person name="Kawasawa Y."/>
            <person name="Kelso J."/>
            <person name="Kitamura H."/>
            <person name="Kitano H."/>
            <person name="Kollias G."/>
            <person name="Krishnan S.P."/>
            <person name="Kruger A."/>
            <person name="Kummerfeld S.K."/>
            <person name="Kurochkin I.V."/>
            <person name="Lareau L.F."/>
            <person name="Lazarevic D."/>
            <person name="Lipovich L."/>
            <person name="Liu J."/>
            <person name="Liuni S."/>
            <person name="McWilliam S."/>
            <person name="Madan Babu M."/>
            <person name="Madera M."/>
            <person name="Marchionni L."/>
            <person name="Matsuda H."/>
            <person name="Matsuzawa S."/>
            <person name="Miki H."/>
            <person name="Mignone F."/>
            <person name="Miyake S."/>
            <person name="Morris K."/>
            <person name="Mottagui-Tabar S."/>
            <person name="Mulder N."/>
            <person name="Nakano N."/>
            <person name="Nakauchi H."/>
            <person name="Ng P."/>
            <person name="Nilsson R."/>
            <person name="Nishiguchi S."/>
            <person name="Nishikawa S."/>
            <person name="Nori F."/>
            <person name="Ohara O."/>
            <person name="Okazaki Y."/>
            <person name="Orlando V."/>
            <person name="Pang K.C."/>
            <person name="Pavan W.J."/>
            <person name="Pavesi G."/>
            <person name="Pesole G."/>
            <person name="Petrovsky N."/>
            <person name="Piazza S."/>
            <person name="Reed J."/>
            <person name="Reid J.F."/>
            <person name="Ring B.Z."/>
            <person name="Ringwald M."/>
            <person name="Rost B."/>
            <person name="Ruan Y."/>
            <person name="Salzberg S.L."/>
            <person name="Sandelin A."/>
            <person name="Schneider C."/>
            <person name="Schoenbach C."/>
            <person name="Sekiguchi K."/>
            <person name="Semple C.A."/>
            <person name="Seno S."/>
            <person name="Sessa L."/>
            <person name="Sheng Y."/>
            <person name="Shibata Y."/>
            <person name="Shimada H."/>
            <person name="Shimada K."/>
            <person name="Silva D."/>
            <person name="Sinclair B."/>
            <person name="Sperling S."/>
            <person name="Stupka E."/>
            <person name="Sugiura K."/>
            <person name="Sultana R."/>
            <person name="Takenaka Y."/>
            <person name="Taki K."/>
            <person name="Tammoja K."/>
            <person name="Tan S.L."/>
            <person name="Tang S."/>
            <person name="Taylor M.S."/>
            <person name="Tegner J."/>
            <person name="Teichmann S.A."/>
            <person name="Ueda H.R."/>
            <person name="van Nimwegen E."/>
            <person name="Verardo R."/>
            <person name="Wei C.L."/>
            <person name="Yagi K."/>
            <person name="Yamanishi H."/>
            <person name="Zabarovsky E."/>
            <person name="Zhu S."/>
            <person name="Zimmer A."/>
            <person name="Hide W."/>
            <person name="Bult C."/>
            <person name="Grimmond S.M."/>
            <person name="Teasdale R.D."/>
            <person name="Liu E.T."/>
            <person name="Brusic V."/>
            <person name="Quackenbush J."/>
            <person name="Wahlestedt C."/>
            <person name="Mattick J.S."/>
            <person name="Hume D.A."/>
            <person name="Kai C."/>
            <person name="Sasaki D."/>
            <person name="Tomaru Y."/>
            <person name="Fukuda S."/>
            <person name="Kanamori-Katayama M."/>
            <person name="Suzuki M."/>
            <person name="Aoki J."/>
            <person name="Arakawa T."/>
            <person name="Iida J."/>
            <person name="Imamura K."/>
            <person name="Itoh M."/>
            <person name="Kato T."/>
            <person name="Kawaji H."/>
            <person name="Kawagashira N."/>
            <person name="Kawashima T."/>
            <person name="Kojima M."/>
            <person name="Kondo S."/>
            <person name="Konno H."/>
            <person name="Nakano K."/>
            <person name="Ninomiya N."/>
            <person name="Nishio T."/>
            <person name="Okada M."/>
            <person name="Plessy C."/>
            <person name="Shibata K."/>
            <person name="Shiraki T."/>
            <person name="Suzuki S."/>
            <person name="Tagami M."/>
            <person name="Waki K."/>
            <person name="Watahiki A."/>
            <person name="Okamura-Oho Y."/>
            <person name="Suzuki H."/>
            <person name="Kawai J."/>
            <person name="Hayashizaki Y."/>
        </authorList>
    </citation>
    <scope>NUCLEOTIDE SEQUENCE [LARGE SCALE MRNA] OF 1-1053</scope>
    <source>
        <strain>C57BL/6J</strain>
        <strain>NOD</strain>
        <tissue>Fetal head</tissue>
        <tissue>Spleen</tissue>
        <tissue>Wolffian duct</tissue>
    </source>
</reference>
<reference key="3">
    <citation type="journal article" date="2003" name="DNA Res.">
        <title>Prediction of the coding sequences of mouse homologues of KIAA gene: III. The complete nucleotide sequences of 500 mouse KIAA-homologous cDNAs identified by screening of terminal sequences of cDNA clones randomly sampled from size-fractionated libraries.</title>
        <authorList>
            <person name="Okazaki N."/>
            <person name="Kikuno R."/>
            <person name="Ohara R."/>
            <person name="Inamoto S."/>
            <person name="Koseki H."/>
            <person name="Hiraoka S."/>
            <person name="Saga Y."/>
            <person name="Nagase T."/>
            <person name="Ohara O."/>
            <person name="Koga H."/>
        </authorList>
    </citation>
    <scope>NUCLEOTIDE SEQUENCE [LARGE SCALE MRNA] OF 577-1198</scope>
    <source>
        <tissue>Embryonic tail</tissue>
    </source>
</reference>
<reference key="4">
    <citation type="journal article" date="2004" name="Genome Res.">
        <title>The status, quality, and expansion of the NIH full-length cDNA project: the Mammalian Gene Collection (MGC).</title>
        <authorList>
            <consortium name="The MGC Project Team"/>
        </authorList>
    </citation>
    <scope>NUCLEOTIDE SEQUENCE [LARGE SCALE MRNA] OF 638-1198</scope>
    <source>
        <strain>Czech II</strain>
        <tissue>Mammary gland</tissue>
    </source>
</reference>
<reference key="5">
    <citation type="journal article" date="2007" name="Proc. Natl. Acad. Sci. U.S.A.">
        <title>Large-scale phosphorylation analysis of mouse liver.</title>
        <authorList>
            <person name="Villen J."/>
            <person name="Beausoleil S.A."/>
            <person name="Gerber S.A."/>
            <person name="Gygi S.P."/>
        </authorList>
    </citation>
    <scope>PHOSPHORYLATION [LARGE SCALE ANALYSIS] AT SER-207</scope>
    <scope>IDENTIFICATION BY MASS SPECTROMETRY [LARGE SCALE ANALYSIS]</scope>
    <source>
        <tissue>Liver</tissue>
    </source>
</reference>
<reference key="6">
    <citation type="journal article" date="2010" name="Cell">
        <title>A tissue-specific atlas of mouse protein phosphorylation and expression.</title>
        <authorList>
            <person name="Huttlin E.L."/>
            <person name="Jedrychowski M.P."/>
            <person name="Elias J.E."/>
            <person name="Goswami T."/>
            <person name="Rad R."/>
            <person name="Beausoleil S.A."/>
            <person name="Villen J."/>
            <person name="Haas W."/>
            <person name="Sowa M.E."/>
            <person name="Gygi S.P."/>
        </authorList>
    </citation>
    <scope>PHOSPHORYLATION [LARGE SCALE ANALYSIS] AT SER-203; SER-207 AND SER-213</scope>
    <scope>IDENTIFICATION BY MASS SPECTROMETRY [LARGE SCALE ANALYSIS]</scope>
    <source>
        <tissue>Brown adipose tissue</tissue>
        <tissue>Kidney</tissue>
        <tissue>Liver</tissue>
        <tissue>Lung</tissue>
        <tissue>Pancreas</tissue>
    </source>
</reference>
<reference key="7">
    <citation type="journal article" date="2013" name="Mol. Cell">
        <title>SIRT5-mediated lysine desuccinylation impacts diverse metabolic pathways.</title>
        <authorList>
            <person name="Park J."/>
            <person name="Chen Y."/>
            <person name="Tishkoff D.X."/>
            <person name="Peng C."/>
            <person name="Tan M."/>
            <person name="Dai L."/>
            <person name="Xie Z."/>
            <person name="Zhang Y."/>
            <person name="Zwaans B.M."/>
            <person name="Skinner M.E."/>
            <person name="Lombard D.B."/>
            <person name="Zhao Y."/>
        </authorList>
    </citation>
    <scope>ACETYLATION [LARGE SCALE ANALYSIS] AT LYS-384</scope>
    <scope>IDENTIFICATION BY MASS SPECTROMETRY [LARGE SCALE ANALYSIS]</scope>
    <source>
        <tissue>Embryonic fibroblast</tissue>
    </source>
</reference>
<comment type="function">
    <text evidence="4">Mediates spermatid-Sertoli adhesion during spermatogenesis.</text>
</comment>
<comment type="subcellular location">
    <subcellularLocation>
        <location evidence="5">Golgi apparatus membrane</location>
        <topology evidence="5">Single-pass membrane protein</topology>
    </subcellularLocation>
</comment>
<comment type="tissue specificity">
    <text evidence="4">Testis. Localizes to the acrosome of spermatids, as well as to Leydig cells. Can be detected on the acrosome beginning at steps 2-3 and continuing until step 12 of spermiogenesis.</text>
</comment>
<comment type="similarity">
    <text evidence="5">Belongs to the FNDC3 family.</text>
</comment>
<organism>
    <name type="scientific">Mus musculus</name>
    <name type="common">Mouse</name>
    <dbReference type="NCBI Taxonomy" id="10090"/>
    <lineage>
        <taxon>Eukaryota</taxon>
        <taxon>Metazoa</taxon>
        <taxon>Chordata</taxon>
        <taxon>Craniata</taxon>
        <taxon>Vertebrata</taxon>
        <taxon>Euteleostomi</taxon>
        <taxon>Mammalia</taxon>
        <taxon>Eutheria</taxon>
        <taxon>Euarchontoglires</taxon>
        <taxon>Glires</taxon>
        <taxon>Rodentia</taxon>
        <taxon>Myomorpha</taxon>
        <taxon>Muroidea</taxon>
        <taxon>Muridae</taxon>
        <taxon>Murinae</taxon>
        <taxon>Mus</taxon>
        <taxon>Mus</taxon>
    </lineage>
</organism>
<sequence length="1198" mass="131958">MAEHPPLLDTAQILSSDISLLSAPIVSADGTQQVILVQVNPGEAFTIRREDGQFQCITGPAQVPMMSPNGSVPPIYVPPGYAPQVIEDNGVRRVVVVPQSPEFHPGGHTVIHRSPHPPLPGFIPVPTMMPPPPRHMYSPVTGAGDMATQYMPQYQSSQVYADVDAHSTHGRSNFRDERSSKTYERLQKKLKDRQGTQKDKMSSPPPSPQKCPSPISEHNGLIKGQNASGGNTGSARNRSGRGRSCTQVDPEMEEKDEETKAFEAFLSNIVKPVASDIQARTVLLTWSPPSSFINGEVNETAVPELFNYEVLVSSTGKEGKYRSVYIGEETSVTLNDLKPATDYHAKVQAESNSIKGIPSEAESFTTLSCEPDPPNAPRIANRTKNSLTLQWKAPSDNGSKIQSFILEWDEGKGNGEFCQCYMGSQKQFKITKLSPAMGCKFRLSAKNDYGVSDFSEEVLYYTSGCAPSVPASPVLTKAGVTWLSLQWTKPSGTPSDEGISYILEMEEETSGYGFKPKYDGEDLAYTVKNLRRSTKYKFKVIAYNSEGKSNPSEVVEFSTCPDKPGVPVKPSVKGKIHSHGFKITWDPPKDNGGAPINKYVVEMAEGSNGNKWDMIYSGTTREHLCDRLTPGCYYRLRVYCISDGGQSAVSESLLVQTPAVPPGPCLPPRLQGRPKAKEIQLRWGPPQVDGGSPISCYAVEMTPADKDEPRDVYQGSEVECTVGSLLPGKTYSFRLRAANRIGFGPFSEKYDITTAPGPPDQCRPPQVTCRSATCAQVNWEIPLSNGTDVTEYRLEWGGVEGSMQMCYCGPGLSCELKGLSPATTYYCRVQAMSVVGAGPFSEVVACVTPPSVPAIVTCLQEISDDDIEYPHYSPSTCLAISWKEPYDHGSEILAYSIDLGDKQPLTVGKMTSYIIDSLQPDTTYRIRIQALNSLGAGPFSHTIKLKTKPLPPDPPRLECVAFNHQNLKLKWGEGTPKTLSTDAVQYHLQMEDRNGRFVSLYRGPCHTYKVQRLSESTSYKFCIQACNEAGEGPLSQEYVFTTPKSLPAALKAPKIEKINDHICEITWEYLQPMKGDPVIYNLQVMVGKDSEFKQIYKGPDTSFRYSSLQLNCEYRFRVCAIRQCQDPTGHQDLVGPYSTTVFFISQRTEPPASSNKDSVDSARTRRTLSDEQCAAVILVVFAFFSILIAFIIQYFVIK</sequence>
<keyword id="KW-0007">Acetylation</keyword>
<keyword id="KW-0333">Golgi apparatus</keyword>
<keyword id="KW-0472">Membrane</keyword>
<keyword id="KW-0597">Phosphoprotein</keyword>
<keyword id="KW-1185">Reference proteome</keyword>
<keyword id="KW-0677">Repeat</keyword>
<keyword id="KW-0812">Transmembrane</keyword>
<keyword id="KW-1133">Transmembrane helix</keyword>
<accession>Q8BX90</accession>
<accession>Q2VEY7</accession>
<accession>Q3T9K5</accession>
<accession>Q6ZQ15</accession>
<accession>Q811D3</accession>
<accession>Q8BME4</accession>
<accession>Q8BTM3</accession>
<dbReference type="EMBL" id="DQ192036">
    <property type="protein sequence ID" value="ABA82149.1"/>
    <property type="molecule type" value="mRNA"/>
</dbReference>
<dbReference type="EMBL" id="AK032733">
    <property type="protein sequence ID" value="BAC28002.2"/>
    <property type="molecule type" value="mRNA"/>
</dbReference>
<dbReference type="EMBL" id="AK048586">
    <property type="protein sequence ID" value="BAC33381.1"/>
    <property type="molecule type" value="mRNA"/>
</dbReference>
<dbReference type="EMBL" id="AK172458">
    <property type="protein sequence ID" value="BAE43015.1"/>
    <property type="molecule type" value="mRNA"/>
</dbReference>
<dbReference type="EMBL" id="AK129250">
    <property type="protein sequence ID" value="BAC98060.1"/>
    <property type="molecule type" value="mRNA"/>
</dbReference>
<dbReference type="EMBL" id="BC047066">
    <property type="protein sequence ID" value="AAH47066.1"/>
    <property type="molecule type" value="mRNA"/>
</dbReference>
<dbReference type="CCDS" id="CCDS27264.1"/>
<dbReference type="RefSeq" id="NP_997519.2">
    <property type="nucleotide sequence ID" value="NM_207636.3"/>
</dbReference>
<dbReference type="RefSeq" id="XP_006519178.2">
    <property type="nucleotide sequence ID" value="XM_006519115.5"/>
</dbReference>
<dbReference type="RefSeq" id="XP_006519179.1">
    <property type="nucleotide sequence ID" value="XM_006519116.5"/>
</dbReference>
<dbReference type="RefSeq" id="XP_030103717.1">
    <property type="nucleotide sequence ID" value="XM_030247857.2"/>
</dbReference>
<dbReference type="RefSeq" id="XP_036014558.1">
    <property type="nucleotide sequence ID" value="XM_036158665.1"/>
</dbReference>
<dbReference type="RefSeq" id="XP_036014559.1">
    <property type="nucleotide sequence ID" value="XM_036158666.1"/>
</dbReference>
<dbReference type="SMR" id="Q8BX90"/>
<dbReference type="BioGRID" id="235278">
    <property type="interactions" value="1"/>
</dbReference>
<dbReference type="FunCoup" id="Q8BX90">
    <property type="interactions" value="4013"/>
</dbReference>
<dbReference type="STRING" id="10090.ENSMUSP00000086411"/>
<dbReference type="GlyGen" id="Q8BX90">
    <property type="glycosylation" value="2 sites, 1 N-linked glycan (1 site)"/>
</dbReference>
<dbReference type="iPTMnet" id="Q8BX90"/>
<dbReference type="PhosphoSitePlus" id="Q8BX90"/>
<dbReference type="SwissPalm" id="Q8BX90"/>
<dbReference type="jPOST" id="Q8BX90"/>
<dbReference type="PaxDb" id="10090-ENSMUSP00000086411"/>
<dbReference type="ProteomicsDB" id="267387"/>
<dbReference type="Pumba" id="Q8BX90"/>
<dbReference type="Antibodypedia" id="2293">
    <property type="antibodies" value="129 antibodies from 19 providers"/>
</dbReference>
<dbReference type="DNASU" id="319448"/>
<dbReference type="Ensembl" id="ENSMUST00000089017.12">
    <property type="protein sequence ID" value="ENSMUSP00000086411.6"/>
    <property type="gene ID" value="ENSMUSG00000033487.15"/>
</dbReference>
<dbReference type="GeneID" id="319448"/>
<dbReference type="KEGG" id="mmu:319448"/>
<dbReference type="UCSC" id="uc007upf.1">
    <property type="organism name" value="mouse"/>
</dbReference>
<dbReference type="AGR" id="MGI:1196463"/>
<dbReference type="CTD" id="22862"/>
<dbReference type="MGI" id="MGI:1196463">
    <property type="gene designation" value="Fndc3a"/>
</dbReference>
<dbReference type="VEuPathDB" id="HostDB:ENSMUSG00000033487"/>
<dbReference type="eggNOG" id="ENOG502QRT8">
    <property type="taxonomic scope" value="Eukaryota"/>
</dbReference>
<dbReference type="GeneTree" id="ENSGT00940000159319"/>
<dbReference type="HOGENOM" id="CLU_004152_0_0_1"/>
<dbReference type="InParanoid" id="Q8BX90"/>
<dbReference type="OMA" id="GETEAMC"/>
<dbReference type="OrthoDB" id="443915at2759"/>
<dbReference type="PhylomeDB" id="Q8BX90"/>
<dbReference type="TreeFam" id="TF316401"/>
<dbReference type="BioGRID-ORCS" id="319448">
    <property type="hits" value="3 hits in 78 CRISPR screens"/>
</dbReference>
<dbReference type="ChiTaRS" id="Fndc3a">
    <property type="organism name" value="mouse"/>
</dbReference>
<dbReference type="PRO" id="PR:Q8BX90"/>
<dbReference type="Proteomes" id="UP000000589">
    <property type="component" value="Chromosome 14"/>
</dbReference>
<dbReference type="RNAct" id="Q8BX90">
    <property type="molecule type" value="protein"/>
</dbReference>
<dbReference type="Bgee" id="ENSMUSG00000033487">
    <property type="expression patterns" value="Expressed in parotid gland and 257 other cell types or tissues"/>
</dbReference>
<dbReference type="ExpressionAtlas" id="Q8BX90">
    <property type="expression patterns" value="baseline and differential"/>
</dbReference>
<dbReference type="GO" id="GO:0001669">
    <property type="term" value="C:acrosomal vesicle"/>
    <property type="evidence" value="ECO:0000314"/>
    <property type="project" value="MGI"/>
</dbReference>
<dbReference type="GO" id="GO:0031410">
    <property type="term" value="C:cytoplasmic vesicle"/>
    <property type="evidence" value="ECO:0000314"/>
    <property type="project" value="MGI"/>
</dbReference>
<dbReference type="GO" id="GO:0005829">
    <property type="term" value="C:cytosol"/>
    <property type="evidence" value="ECO:0000314"/>
    <property type="project" value="MGI"/>
</dbReference>
<dbReference type="GO" id="GO:0000139">
    <property type="term" value="C:Golgi membrane"/>
    <property type="evidence" value="ECO:0007669"/>
    <property type="project" value="UniProtKB-SubCell"/>
</dbReference>
<dbReference type="GO" id="GO:0012506">
    <property type="term" value="C:vesicle membrane"/>
    <property type="evidence" value="ECO:0000314"/>
    <property type="project" value="MGI"/>
</dbReference>
<dbReference type="GO" id="GO:0098609">
    <property type="term" value="P:cell-cell adhesion"/>
    <property type="evidence" value="ECO:0000315"/>
    <property type="project" value="MGI"/>
</dbReference>
<dbReference type="GO" id="GO:0009566">
    <property type="term" value="P:fertilization"/>
    <property type="evidence" value="ECO:0000315"/>
    <property type="project" value="MGI"/>
</dbReference>
<dbReference type="GO" id="GO:0060009">
    <property type="term" value="P:Sertoli cell development"/>
    <property type="evidence" value="ECO:0000315"/>
    <property type="project" value="MGI"/>
</dbReference>
<dbReference type="GO" id="GO:0007286">
    <property type="term" value="P:spermatid development"/>
    <property type="evidence" value="ECO:0000315"/>
    <property type="project" value="MGI"/>
</dbReference>
<dbReference type="CDD" id="cd00063">
    <property type="entry name" value="FN3"/>
    <property type="match status" value="9"/>
</dbReference>
<dbReference type="FunFam" id="2.60.40.10:FF:000175">
    <property type="entry name" value="Fibronectin type III domain containing 3A"/>
    <property type="match status" value="1"/>
</dbReference>
<dbReference type="FunFam" id="2.60.40.10:FF:000180">
    <property type="entry name" value="Fibronectin type III domain containing 3A"/>
    <property type="match status" value="1"/>
</dbReference>
<dbReference type="FunFam" id="2.60.40.10:FF:000185">
    <property type="entry name" value="Fibronectin type III domain containing 3A"/>
    <property type="match status" value="1"/>
</dbReference>
<dbReference type="FunFam" id="2.60.40.10:FF:000195">
    <property type="entry name" value="Fibronectin type III domain containing 3A"/>
    <property type="match status" value="1"/>
</dbReference>
<dbReference type="FunFam" id="2.60.40.10:FF:000210">
    <property type="entry name" value="Fibronectin type III domain containing 3A"/>
    <property type="match status" value="1"/>
</dbReference>
<dbReference type="FunFam" id="2.60.40.10:FF:000309">
    <property type="entry name" value="Fibronectin type III domain containing 3B"/>
    <property type="match status" value="1"/>
</dbReference>
<dbReference type="FunFam" id="2.60.40.10:FF:000366">
    <property type="entry name" value="fibronectin type-III domain-containing protein 3A isoform X1"/>
    <property type="match status" value="1"/>
</dbReference>
<dbReference type="FunFam" id="2.60.40.10:FF:000373">
    <property type="entry name" value="fibronectin type-III domain-containing protein 3A isoform X1"/>
    <property type="match status" value="1"/>
</dbReference>
<dbReference type="FunFam" id="2.60.40.10:FF:000337">
    <property type="entry name" value="fibronectin type-III domain-containing protein 3A isoform X2"/>
    <property type="match status" value="1"/>
</dbReference>
<dbReference type="Gene3D" id="2.60.40.10">
    <property type="entry name" value="Immunoglobulins"/>
    <property type="match status" value="9"/>
</dbReference>
<dbReference type="InterPro" id="IPR050617">
    <property type="entry name" value="E3_ligase_FN3/SPRY"/>
</dbReference>
<dbReference type="InterPro" id="IPR003961">
    <property type="entry name" value="FN3_dom"/>
</dbReference>
<dbReference type="InterPro" id="IPR036116">
    <property type="entry name" value="FN3_sf"/>
</dbReference>
<dbReference type="InterPro" id="IPR013783">
    <property type="entry name" value="Ig-like_fold"/>
</dbReference>
<dbReference type="PANTHER" id="PTHR24099">
    <property type="entry name" value="E3 UBIQUITIN-PROTEIN LIGASE TRIM36-RELATED"/>
    <property type="match status" value="1"/>
</dbReference>
<dbReference type="PANTHER" id="PTHR24099:SF11">
    <property type="entry name" value="FIBRONECTIN TYPE III DOMAIN-CONTAINING 3BA-RELATED"/>
    <property type="match status" value="1"/>
</dbReference>
<dbReference type="Pfam" id="PF00041">
    <property type="entry name" value="fn3"/>
    <property type="match status" value="8"/>
</dbReference>
<dbReference type="PRINTS" id="PR00014">
    <property type="entry name" value="FNTYPEIII"/>
</dbReference>
<dbReference type="SMART" id="SM00060">
    <property type="entry name" value="FN3"/>
    <property type="match status" value="9"/>
</dbReference>
<dbReference type="SUPFAM" id="SSF49265">
    <property type="entry name" value="Fibronectin type III"/>
    <property type="match status" value="6"/>
</dbReference>
<dbReference type="PROSITE" id="PS50853">
    <property type="entry name" value="FN3"/>
    <property type="match status" value="9"/>
</dbReference>
<gene>
    <name type="primary">Fndc3a</name>
    <name type="synonym">D14Ertd453e</name>
    <name type="synonym">Fndc3</name>
    <name type="synonym">Kiaa0970</name>
</gene>
<protein>
    <recommendedName>
        <fullName>Fibronectin type-III domain-containing protein 3A</fullName>
    </recommendedName>
</protein>
<evidence type="ECO:0000255" key="1"/>
<evidence type="ECO:0000255" key="2">
    <source>
        <dbReference type="PROSITE-ProRule" id="PRU00316"/>
    </source>
</evidence>
<evidence type="ECO:0000256" key="3">
    <source>
        <dbReference type="SAM" id="MobiDB-lite"/>
    </source>
</evidence>
<evidence type="ECO:0000269" key="4">
    <source>
    </source>
</evidence>
<evidence type="ECO:0000305" key="5"/>
<evidence type="ECO:0007744" key="6">
    <source>
    </source>
</evidence>
<evidence type="ECO:0007744" key="7">
    <source>
    </source>
</evidence>
<evidence type="ECO:0007744" key="8">
    <source>
    </source>
</evidence>
<feature type="chain" id="PRO_0000087322" description="Fibronectin type-III domain-containing protein 3A">
    <location>
        <begin position="1"/>
        <end position="1198"/>
    </location>
</feature>
<feature type="transmembrane region" description="Helical" evidence="1">
    <location>
        <begin position="1177"/>
        <end position="1197"/>
    </location>
</feature>
<feature type="domain" description="Fibronectin type-III 1" evidence="2">
    <location>
        <begin position="268"/>
        <end position="369"/>
    </location>
</feature>
<feature type="domain" description="Fibronectin type-III 2" evidence="2">
    <location>
        <begin position="373"/>
        <end position="465"/>
    </location>
</feature>
<feature type="domain" description="Fibronectin type-III 3" evidence="2">
    <location>
        <begin position="469"/>
        <end position="562"/>
    </location>
</feature>
<feature type="domain" description="Fibronectin type-III 4" evidence="2">
    <location>
        <begin position="566"/>
        <end position="660"/>
    </location>
</feature>
<feature type="domain" description="Fibronectin type-III 5" evidence="2">
    <location>
        <begin position="664"/>
        <end position="757"/>
    </location>
</feature>
<feature type="domain" description="Fibronectin type-III 6" evidence="2">
    <location>
        <begin position="761"/>
        <end position="851"/>
    </location>
</feature>
<feature type="domain" description="Fibronectin type-III 7" evidence="2">
    <location>
        <begin position="863"/>
        <end position="950"/>
    </location>
</feature>
<feature type="domain" description="Fibronectin type-III 8" evidence="2">
    <location>
        <begin position="951"/>
        <end position="1045"/>
    </location>
</feature>
<feature type="domain" description="Fibronectin type-III 9" evidence="2">
    <location>
        <begin position="1049"/>
        <end position="1151"/>
    </location>
</feature>
<feature type="region of interest" description="Disordered" evidence="3">
    <location>
        <begin position="188"/>
        <end position="257"/>
    </location>
</feature>
<feature type="compositionally biased region" description="Basic and acidic residues" evidence="3">
    <location>
        <begin position="188"/>
        <end position="201"/>
    </location>
</feature>
<feature type="modified residue" description="Phosphoserine" evidence="7">
    <location>
        <position position="203"/>
    </location>
</feature>
<feature type="modified residue" description="Phosphoserine" evidence="6 7">
    <location>
        <position position="207"/>
    </location>
</feature>
<feature type="modified residue" description="Phosphoserine" evidence="7">
    <location>
        <position position="213"/>
    </location>
</feature>
<feature type="modified residue" description="N6-acetyllysine" evidence="8">
    <location>
        <position position="384"/>
    </location>
</feature>
<feature type="sequence conflict" description="In Ref. 2; BAE43015." evidence="5" ref="2">
    <original>D</original>
    <variation>E</variation>
    <location>
        <position position="249"/>
    </location>
</feature>
<feature type="sequence conflict" description="In Ref. 2; BAC28002." evidence="5" ref="2">
    <original>T</original>
    <variation>A</variation>
    <location>
        <position position="620"/>
    </location>
</feature>
<feature type="sequence conflict" description="In Ref. 2; BAC33381." evidence="5" ref="2">
    <original>D</original>
    <variation>G</variation>
    <location>
        <position position="788"/>
    </location>
</feature>
<feature type="sequence conflict" description="In Ref. 4; AAH47066." evidence="5" ref="4">
    <original>R</original>
    <variation>Q</variation>
    <location>
        <position position="1165"/>
    </location>
</feature>
<proteinExistence type="evidence at protein level"/>
<name>FND3A_MOUSE</name>